<reference key="1">
    <citation type="journal article" date="1991" name="Protein Seq. Data Anal.">
        <title>Complete amino acid sequence of equine miniplasminogen.</title>
        <authorList>
            <person name="Schaller J."/>
            <person name="Straub C."/>
            <person name="Kaempfer U."/>
            <person name="Rickli E.E."/>
        </authorList>
    </citation>
    <scope>PROTEIN SEQUENCE</scope>
    <source>
        <tissue>Plasma</tissue>
    </source>
</reference>
<comment type="function">
    <text evidence="1">Plasmin dissolves the fibrin of blood clots and acts as a proteolytic factor in a variety of other processes including embryonic development, tissue remodeling, tumor invasion, and inflammation. In ovulation, weakens the walls of the Graafian follicle. It activates the urokinase-type plasminogen activator, collagenases and several complement zymogens, such as C1, C4 and C5. Cleavage of fibronectin and laminin leads to cell detachment and apoptosis. Also cleaves fibrin, thrombospondin and von Willebrand factor. Its role in tissue remodeling and tumor invasion may be modulated by CSPG4. Binds to cells (By similarity).</text>
</comment>
<comment type="catalytic activity">
    <reaction>
        <text>Preferential cleavage: Lys-|-Xaa &gt; Arg-|-Xaa, higher selectivity than trypsin. Converts fibrin into soluble products.</text>
        <dbReference type="EC" id="3.4.21.7"/>
    </reaction>
</comment>
<comment type="activity regulation">
    <text>Converted into plasmin by plasminogen activators, both plasminogen and its activator being bound to fibrin. Activated with catalytic amounts of streptokinase.</text>
</comment>
<comment type="subunit">
    <text evidence="2">Interacts with CSPG4 and AMOT. Interacts (via the Kringle domains) with HRG; the interaction tethers PLG to the cell surface and enhances its activation. Interacts (via Kringle 4 domain) with ADA; the interaction stimulates PLG activation when in complex with DPP4. Angiostatin: Interacts with ATP5F1A; the interaction inhibits most of the angiogenic effects of angiostatin.</text>
</comment>
<comment type="subcellular location">
    <subcellularLocation>
        <location evidence="1">Secreted</location>
    </subcellularLocation>
    <text evidence="1">Locates to the cell surface where it is proteolytically cleaved to produce the active plasmin. Interaction with HRG tethers it to the cell surface (By similarity).</text>
</comment>
<comment type="domain">
    <text evidence="1">Kringle domains mediate interaction with CSPG4.</text>
</comment>
<comment type="miscellaneous">
    <text>Plasmin is inactivated by alpha-2-antiplasmin immediately after dissociation from the clot.</text>
</comment>
<comment type="similarity">
    <text evidence="4">Belongs to the peptidase S1 family. Plasminogen subfamily.</text>
</comment>
<name>PLMN_HORSE</name>
<feature type="chain" id="PRO_0000028051" description="Plasmin heavy chain A">
    <location>
        <begin position="1" status="less than"/>
        <end position="108"/>
    </location>
</feature>
<feature type="chain" id="PRO_0000028052" description="Plasmin light chain B">
    <location>
        <begin position="109"/>
        <end position="338"/>
    </location>
</feature>
<feature type="domain" description="Kringle 5" evidence="3">
    <location>
        <begin position="9"/>
        <end position="88"/>
    </location>
</feature>
<feature type="domain" description="Peptidase S1" evidence="4">
    <location>
        <begin position="109"/>
        <end position="336"/>
    </location>
</feature>
<feature type="active site" description="Charge relay system" evidence="1">
    <location>
        <position position="150"/>
    </location>
</feature>
<feature type="active site" description="Charge relay system" evidence="1">
    <location>
        <position position="193"/>
    </location>
</feature>
<feature type="active site" description="Charge relay system" evidence="1">
    <location>
        <position position="288"/>
    </location>
</feature>
<feature type="site" description="Interaction with streptokinase" evidence="5">
    <location>
        <position position="157"/>
    </location>
</feature>
<feature type="site" description="Interaction with streptokinase" evidence="5">
    <location>
        <position position="191"/>
    </location>
</feature>
<feature type="site" description="Interaction with streptokinase" evidence="5">
    <location>
        <position position="269"/>
    </location>
</feature>
<feature type="site" description="Site of substrate specificity" evidence="1">
    <location>
        <position position="282"/>
    </location>
</feature>
<feature type="modified residue" description="Phosphoserine" evidence="2">
    <location>
        <position position="125"/>
    </location>
</feature>
<feature type="disulfide bond" evidence="1">
    <location>
        <begin position="9"/>
        <end position="88"/>
    </location>
</feature>
<feature type="disulfide bond" evidence="1">
    <location>
        <begin position="30"/>
        <end position="71"/>
    </location>
</feature>
<feature type="disulfide bond" evidence="1">
    <location>
        <begin position="59"/>
        <end position="83"/>
    </location>
</feature>
<feature type="disulfide bond" description="Interchain (between A and B chains)" evidence="1">
    <location>
        <begin position="95"/>
        <end position="213"/>
    </location>
</feature>
<feature type="disulfide bond" description="Interchain (between A and B chains)" evidence="1">
    <location>
        <begin position="105"/>
        <end position="113"/>
    </location>
</feature>
<feature type="disulfide bond" evidence="1">
    <location>
        <begin position="135"/>
        <end position="151"/>
    </location>
</feature>
<feature type="disulfide bond" evidence="1">
    <location>
        <begin position="227"/>
        <end position="294"/>
    </location>
</feature>
<feature type="disulfide bond" evidence="1">
    <location>
        <begin position="257"/>
        <end position="273"/>
    </location>
</feature>
<feature type="disulfide bond" evidence="1">
    <location>
        <begin position="284"/>
        <end position="312"/>
    </location>
</feature>
<feature type="non-terminal residue">
    <location>
        <position position="1"/>
    </location>
</feature>
<dbReference type="EC" id="3.4.21.7"/>
<dbReference type="PIR" id="A61545">
    <property type="entry name" value="A61545"/>
</dbReference>
<dbReference type="SMR" id="P80010"/>
<dbReference type="STRING" id="9796.ENSECAP00000034982"/>
<dbReference type="MEROPS" id="S01.233"/>
<dbReference type="PaxDb" id="9796-ENSECAP00000034982"/>
<dbReference type="PeptideAtlas" id="P80010"/>
<dbReference type="HOGENOM" id="CLU_017565_0_0_1"/>
<dbReference type="InParanoid" id="P80010"/>
<dbReference type="Proteomes" id="UP000002281">
    <property type="component" value="Unplaced"/>
</dbReference>
<dbReference type="GO" id="GO:0005615">
    <property type="term" value="C:extracellular space"/>
    <property type="evidence" value="ECO:0000318"/>
    <property type="project" value="GO_Central"/>
</dbReference>
<dbReference type="GO" id="GO:0004175">
    <property type="term" value="F:endopeptidase activity"/>
    <property type="evidence" value="ECO:0000318"/>
    <property type="project" value="GO_Central"/>
</dbReference>
<dbReference type="GO" id="GO:0004252">
    <property type="term" value="F:serine-type endopeptidase activity"/>
    <property type="evidence" value="ECO:0007669"/>
    <property type="project" value="UniProtKB-EC"/>
</dbReference>
<dbReference type="GO" id="GO:0005102">
    <property type="term" value="F:signaling receptor binding"/>
    <property type="evidence" value="ECO:0000318"/>
    <property type="project" value="GO_Central"/>
</dbReference>
<dbReference type="GO" id="GO:0007596">
    <property type="term" value="P:blood coagulation"/>
    <property type="evidence" value="ECO:0007669"/>
    <property type="project" value="UniProtKB-KW"/>
</dbReference>
<dbReference type="GO" id="GO:0042730">
    <property type="term" value="P:fibrinolysis"/>
    <property type="evidence" value="ECO:0007669"/>
    <property type="project" value="UniProtKB-KW"/>
</dbReference>
<dbReference type="GO" id="GO:0006508">
    <property type="term" value="P:proteolysis"/>
    <property type="evidence" value="ECO:0000318"/>
    <property type="project" value="GO_Central"/>
</dbReference>
<dbReference type="GO" id="GO:0048771">
    <property type="term" value="P:tissue remodeling"/>
    <property type="evidence" value="ECO:0007669"/>
    <property type="project" value="UniProtKB-KW"/>
</dbReference>
<dbReference type="CDD" id="cd00108">
    <property type="entry name" value="KR"/>
    <property type="match status" value="1"/>
</dbReference>
<dbReference type="CDD" id="cd00190">
    <property type="entry name" value="Tryp_SPc"/>
    <property type="match status" value="1"/>
</dbReference>
<dbReference type="FunFam" id="2.40.20.10:FF:000014">
    <property type="entry name" value="Plasminogen"/>
    <property type="match status" value="1"/>
</dbReference>
<dbReference type="FunFam" id="2.40.10.10:FF:000003">
    <property type="entry name" value="Transmembrane serine protease 3"/>
    <property type="match status" value="1"/>
</dbReference>
<dbReference type="Gene3D" id="2.40.20.10">
    <property type="entry name" value="Plasminogen Kringle 4"/>
    <property type="match status" value="1"/>
</dbReference>
<dbReference type="Gene3D" id="2.40.10.10">
    <property type="entry name" value="Trypsin-like serine proteases"/>
    <property type="match status" value="1"/>
</dbReference>
<dbReference type="InterPro" id="IPR000001">
    <property type="entry name" value="Kringle"/>
</dbReference>
<dbReference type="InterPro" id="IPR013806">
    <property type="entry name" value="Kringle-like"/>
</dbReference>
<dbReference type="InterPro" id="IPR018056">
    <property type="entry name" value="Kringle_CS"/>
</dbReference>
<dbReference type="InterPro" id="IPR038178">
    <property type="entry name" value="Kringle_sf"/>
</dbReference>
<dbReference type="InterPro" id="IPR009003">
    <property type="entry name" value="Peptidase_S1_PA"/>
</dbReference>
<dbReference type="InterPro" id="IPR043504">
    <property type="entry name" value="Peptidase_S1_PA_chymotrypsin"/>
</dbReference>
<dbReference type="InterPro" id="IPR001314">
    <property type="entry name" value="Peptidase_S1A"/>
</dbReference>
<dbReference type="InterPro" id="IPR050127">
    <property type="entry name" value="Serine_Proteases_S1"/>
</dbReference>
<dbReference type="InterPro" id="IPR001254">
    <property type="entry name" value="Trypsin_dom"/>
</dbReference>
<dbReference type="InterPro" id="IPR018114">
    <property type="entry name" value="TRYPSIN_HIS"/>
</dbReference>
<dbReference type="InterPro" id="IPR033116">
    <property type="entry name" value="TRYPSIN_SER"/>
</dbReference>
<dbReference type="PANTHER" id="PTHR24264:SF54">
    <property type="entry name" value="PEPTIDASE S1 DOMAIN-CONTAINING PROTEIN"/>
    <property type="match status" value="1"/>
</dbReference>
<dbReference type="PANTHER" id="PTHR24264">
    <property type="entry name" value="TRYPSIN-RELATED"/>
    <property type="match status" value="1"/>
</dbReference>
<dbReference type="Pfam" id="PF00051">
    <property type="entry name" value="Kringle"/>
    <property type="match status" value="1"/>
</dbReference>
<dbReference type="Pfam" id="PF00089">
    <property type="entry name" value="Trypsin"/>
    <property type="match status" value="1"/>
</dbReference>
<dbReference type="PRINTS" id="PR00722">
    <property type="entry name" value="CHYMOTRYPSIN"/>
</dbReference>
<dbReference type="PRINTS" id="PR00018">
    <property type="entry name" value="KRINGLE"/>
</dbReference>
<dbReference type="SMART" id="SM00130">
    <property type="entry name" value="KR"/>
    <property type="match status" value="1"/>
</dbReference>
<dbReference type="SMART" id="SM00020">
    <property type="entry name" value="Tryp_SPc"/>
    <property type="match status" value="1"/>
</dbReference>
<dbReference type="SUPFAM" id="SSF57440">
    <property type="entry name" value="Kringle-like"/>
    <property type="match status" value="1"/>
</dbReference>
<dbReference type="SUPFAM" id="SSF50494">
    <property type="entry name" value="Trypsin-like serine proteases"/>
    <property type="match status" value="1"/>
</dbReference>
<dbReference type="PROSITE" id="PS00021">
    <property type="entry name" value="KRINGLE_1"/>
    <property type="match status" value="1"/>
</dbReference>
<dbReference type="PROSITE" id="PS50070">
    <property type="entry name" value="KRINGLE_2"/>
    <property type="match status" value="1"/>
</dbReference>
<dbReference type="PROSITE" id="PS50240">
    <property type="entry name" value="TRYPSIN_DOM"/>
    <property type="match status" value="1"/>
</dbReference>
<dbReference type="PROSITE" id="PS00134">
    <property type="entry name" value="TRYPSIN_HIS"/>
    <property type="match status" value="1"/>
</dbReference>
<dbReference type="PROSITE" id="PS00135">
    <property type="entry name" value="TRYPSIN_SER"/>
    <property type="match status" value="1"/>
</dbReference>
<sequence>VQEPSEPDCMLGIGKGYQGKKATTVTGTRCQAWAAQEPHRHSIFTPEANPWANLEKNYCRNPDGDVNGPWCYTMNPQKLFDYCDVPQCESSPFDCGKPKVEPKKCSGRIVGGCVAIAHSWPWQISLRTRFGRHFCGGTLISPEWVLTAAHCLERSSRPSTYKVVLGTHHELRLAAGAQQIDVSKLFLEPSRADIALLKLSSPAIITQNVIPACLPPADYVVANWAECFVTGWGETQDSSNAGVLKEAQLPVIENKVCNRYEYLNGRVKSTELCAGHLVGGVDSCQGDSGGPLVCFEKDKYILQGVTSWGLGCARPNKPGVYVRVSSFINWIERIMQSN</sequence>
<proteinExistence type="evidence at protein level"/>
<evidence type="ECO:0000250" key="1"/>
<evidence type="ECO:0000250" key="2">
    <source>
        <dbReference type="UniProtKB" id="P00747"/>
    </source>
</evidence>
<evidence type="ECO:0000255" key="3">
    <source>
        <dbReference type="PROSITE-ProRule" id="PRU00121"/>
    </source>
</evidence>
<evidence type="ECO:0000255" key="4">
    <source>
        <dbReference type="PROSITE-ProRule" id="PRU00274"/>
    </source>
</evidence>
<evidence type="ECO:0000305" key="5"/>
<gene>
    <name type="primary">PLG</name>
</gene>
<protein>
    <recommendedName>
        <fullName>Plasminogen</fullName>
        <ecNumber>3.4.21.7</ecNumber>
    </recommendedName>
    <component>
        <recommendedName>
            <fullName>Plasmin heavy chain A</fullName>
        </recommendedName>
    </component>
    <component>
        <recommendedName>
            <fullName>Plasmin light chain B</fullName>
        </recommendedName>
    </component>
</protein>
<keyword id="KW-0094">Blood coagulation</keyword>
<keyword id="KW-0903">Direct protein sequencing</keyword>
<keyword id="KW-1015">Disulfide bond</keyword>
<keyword id="KW-0280">Fibrinolysis</keyword>
<keyword id="KW-0356">Hemostasis</keyword>
<keyword id="KW-0378">Hydrolase</keyword>
<keyword id="KW-0420">Kringle</keyword>
<keyword id="KW-0597">Phosphoprotein</keyword>
<keyword id="KW-0645">Protease</keyword>
<keyword id="KW-1185">Reference proteome</keyword>
<keyword id="KW-0964">Secreted</keyword>
<keyword id="KW-0720">Serine protease</keyword>
<keyword id="KW-0797">Tissue remodeling</keyword>
<keyword id="KW-0865">Zymogen</keyword>
<organism>
    <name type="scientific">Equus caballus</name>
    <name type="common">Horse</name>
    <dbReference type="NCBI Taxonomy" id="9796"/>
    <lineage>
        <taxon>Eukaryota</taxon>
        <taxon>Metazoa</taxon>
        <taxon>Chordata</taxon>
        <taxon>Craniata</taxon>
        <taxon>Vertebrata</taxon>
        <taxon>Euteleostomi</taxon>
        <taxon>Mammalia</taxon>
        <taxon>Eutheria</taxon>
        <taxon>Laurasiatheria</taxon>
        <taxon>Perissodactyla</taxon>
        <taxon>Equidae</taxon>
        <taxon>Equus</taxon>
    </lineage>
</organism>
<accession>P80010</accession>